<evidence type="ECO:0000255" key="1">
    <source>
        <dbReference type="HAMAP-Rule" id="MF_00473"/>
    </source>
</evidence>
<proteinExistence type="inferred from homology"/>
<comment type="function">
    <text evidence="1">Catalyzes the reversible isomerization of glucose-6-phosphate to fructose-6-phosphate.</text>
</comment>
<comment type="catalytic activity">
    <reaction evidence="1">
        <text>alpha-D-glucose 6-phosphate = beta-D-fructose 6-phosphate</text>
        <dbReference type="Rhea" id="RHEA:11816"/>
        <dbReference type="ChEBI" id="CHEBI:57634"/>
        <dbReference type="ChEBI" id="CHEBI:58225"/>
        <dbReference type="EC" id="5.3.1.9"/>
    </reaction>
</comment>
<comment type="pathway">
    <text evidence="1">Carbohydrate biosynthesis; gluconeogenesis.</text>
</comment>
<comment type="pathway">
    <text evidence="1">Carbohydrate degradation; glycolysis; D-glyceraldehyde 3-phosphate and glycerone phosphate from D-glucose: step 2/4.</text>
</comment>
<comment type="subcellular location">
    <subcellularLocation>
        <location evidence="1">Cytoplasm</location>
    </subcellularLocation>
</comment>
<comment type="similarity">
    <text evidence="1">Belongs to the GPI family.</text>
</comment>
<feature type="chain" id="PRO_1000135536" description="Glucose-6-phosphate isomerase">
    <location>
        <begin position="1"/>
        <end position="550"/>
    </location>
</feature>
<feature type="active site" description="Proton donor" evidence="1">
    <location>
        <position position="355"/>
    </location>
</feature>
<feature type="active site" evidence="1">
    <location>
        <position position="386"/>
    </location>
</feature>
<feature type="active site" evidence="1">
    <location>
        <position position="512"/>
    </location>
</feature>
<name>G6PI_RHOOB</name>
<gene>
    <name evidence="1" type="primary">pgi</name>
    <name type="ordered locus">ROP_56360</name>
</gene>
<dbReference type="EC" id="5.3.1.9" evidence="1"/>
<dbReference type="EMBL" id="AP011115">
    <property type="protein sequence ID" value="BAH53883.1"/>
    <property type="molecule type" value="Genomic_DNA"/>
</dbReference>
<dbReference type="RefSeq" id="WP_015889382.1">
    <property type="nucleotide sequence ID" value="NC_012522.1"/>
</dbReference>
<dbReference type="SMR" id="C1AWW0"/>
<dbReference type="STRING" id="632772.ROP_56360"/>
<dbReference type="KEGG" id="rop:ROP_56360"/>
<dbReference type="PATRIC" id="fig|632772.20.peg.5885"/>
<dbReference type="HOGENOM" id="CLU_017947_3_1_11"/>
<dbReference type="OrthoDB" id="140919at2"/>
<dbReference type="UniPathway" id="UPA00109">
    <property type="reaction ID" value="UER00181"/>
</dbReference>
<dbReference type="UniPathway" id="UPA00138"/>
<dbReference type="Proteomes" id="UP000002212">
    <property type="component" value="Chromosome"/>
</dbReference>
<dbReference type="GO" id="GO:0005829">
    <property type="term" value="C:cytosol"/>
    <property type="evidence" value="ECO:0007669"/>
    <property type="project" value="TreeGrafter"/>
</dbReference>
<dbReference type="GO" id="GO:0097367">
    <property type="term" value="F:carbohydrate derivative binding"/>
    <property type="evidence" value="ECO:0007669"/>
    <property type="project" value="InterPro"/>
</dbReference>
<dbReference type="GO" id="GO:0004347">
    <property type="term" value="F:glucose-6-phosphate isomerase activity"/>
    <property type="evidence" value="ECO:0007669"/>
    <property type="project" value="UniProtKB-UniRule"/>
</dbReference>
<dbReference type="GO" id="GO:0048029">
    <property type="term" value="F:monosaccharide binding"/>
    <property type="evidence" value="ECO:0007669"/>
    <property type="project" value="TreeGrafter"/>
</dbReference>
<dbReference type="GO" id="GO:0006094">
    <property type="term" value="P:gluconeogenesis"/>
    <property type="evidence" value="ECO:0007669"/>
    <property type="project" value="UniProtKB-UniRule"/>
</dbReference>
<dbReference type="GO" id="GO:0051156">
    <property type="term" value="P:glucose 6-phosphate metabolic process"/>
    <property type="evidence" value="ECO:0007669"/>
    <property type="project" value="TreeGrafter"/>
</dbReference>
<dbReference type="GO" id="GO:0006096">
    <property type="term" value="P:glycolytic process"/>
    <property type="evidence" value="ECO:0007669"/>
    <property type="project" value="UniProtKB-UniRule"/>
</dbReference>
<dbReference type="CDD" id="cd05015">
    <property type="entry name" value="SIS_PGI_1"/>
    <property type="match status" value="1"/>
</dbReference>
<dbReference type="CDD" id="cd05016">
    <property type="entry name" value="SIS_PGI_2"/>
    <property type="match status" value="1"/>
</dbReference>
<dbReference type="FunFam" id="3.40.50.10490:FF:000018">
    <property type="entry name" value="Glucose-6-phosphate isomerase"/>
    <property type="match status" value="1"/>
</dbReference>
<dbReference type="Gene3D" id="1.10.1390.10">
    <property type="match status" value="1"/>
</dbReference>
<dbReference type="Gene3D" id="3.40.50.10490">
    <property type="entry name" value="Glucose-6-phosphate isomerase like protein, domain 1"/>
    <property type="match status" value="2"/>
</dbReference>
<dbReference type="HAMAP" id="MF_00473">
    <property type="entry name" value="G6P_isomerase"/>
    <property type="match status" value="1"/>
</dbReference>
<dbReference type="InterPro" id="IPR001672">
    <property type="entry name" value="G6P_Isomerase"/>
</dbReference>
<dbReference type="InterPro" id="IPR023096">
    <property type="entry name" value="G6P_Isomerase_C"/>
</dbReference>
<dbReference type="InterPro" id="IPR018189">
    <property type="entry name" value="Phosphoglucose_isomerase_CS"/>
</dbReference>
<dbReference type="InterPro" id="IPR046348">
    <property type="entry name" value="SIS_dom_sf"/>
</dbReference>
<dbReference type="InterPro" id="IPR035476">
    <property type="entry name" value="SIS_PGI_1"/>
</dbReference>
<dbReference type="InterPro" id="IPR035482">
    <property type="entry name" value="SIS_PGI_2"/>
</dbReference>
<dbReference type="NCBIfam" id="NF001211">
    <property type="entry name" value="PRK00179.1"/>
    <property type="match status" value="1"/>
</dbReference>
<dbReference type="PANTHER" id="PTHR11469">
    <property type="entry name" value="GLUCOSE-6-PHOSPHATE ISOMERASE"/>
    <property type="match status" value="1"/>
</dbReference>
<dbReference type="PANTHER" id="PTHR11469:SF1">
    <property type="entry name" value="GLUCOSE-6-PHOSPHATE ISOMERASE"/>
    <property type="match status" value="1"/>
</dbReference>
<dbReference type="Pfam" id="PF00342">
    <property type="entry name" value="PGI"/>
    <property type="match status" value="1"/>
</dbReference>
<dbReference type="PRINTS" id="PR00662">
    <property type="entry name" value="G6PISOMERASE"/>
</dbReference>
<dbReference type="SUPFAM" id="SSF53697">
    <property type="entry name" value="SIS domain"/>
    <property type="match status" value="1"/>
</dbReference>
<dbReference type="PROSITE" id="PS00765">
    <property type="entry name" value="P_GLUCOSE_ISOMERASE_1"/>
    <property type="match status" value="1"/>
</dbReference>
<dbReference type="PROSITE" id="PS00174">
    <property type="entry name" value="P_GLUCOSE_ISOMERASE_2"/>
    <property type="match status" value="1"/>
</dbReference>
<dbReference type="PROSITE" id="PS51463">
    <property type="entry name" value="P_GLUCOSE_ISOMERASE_3"/>
    <property type="match status" value="1"/>
</dbReference>
<keyword id="KW-0963">Cytoplasm</keyword>
<keyword id="KW-0312">Gluconeogenesis</keyword>
<keyword id="KW-0324">Glycolysis</keyword>
<keyword id="KW-0413">Isomerase</keyword>
<sequence length="550" mass="59930">MSSDITGTAAWQKLRDHHAQIQSVHLRELFEKDPARGQELTVSAGDLFIDYSKHRVDRDTIGLLLELARSVDLEARRDAMFAGEHINTSEDRAVLHTALRLPADASLVVDGQDVVADVHEVLDRMGDFTDRVRSGEWRGATGERIKTVVNIGIGGSDLGPVMVYRALRHYADAGISVRFISNVDPADLVRSLSGLDPATTLFIVASKTFSTLETLTNATAARRWLLGGLGLGNEAVAKHFVAVSTHADRVAEFGIDTANMFGFWDWVGGRYSVDSAIGLSVMAAIGKERFAEFLAGFHAVDEHFRTAPLEENAPVLLGLIGLWYSNFFGAESRAVLPYSNDLVRFPAYLQQLTMESNGKSVRADGSPVPASTGEIFWGEPGTNGQHAFYQLLHQGTRLVPSDFIGFGEPTDDLPTADGTGSMHDLLMSNFFAQTKVLAFGKTAEEIAAEGTPEDLVPHKVMPGNRPSTTILAPKLTPSVIGQLIALYEHQVFVEGVVWGIDSFDQWGVELGKTQAVELQPVLTAAEEPAAQSDSSTDSLVRWYRRQRGRA</sequence>
<reference key="1">
    <citation type="submission" date="2009-03" db="EMBL/GenBank/DDBJ databases">
        <title>Comparison of the complete genome sequences of Rhodococcus erythropolis PR4 and Rhodococcus opacus B4.</title>
        <authorList>
            <person name="Takarada H."/>
            <person name="Sekine M."/>
            <person name="Hosoyama A."/>
            <person name="Yamada R."/>
            <person name="Fujisawa T."/>
            <person name="Omata S."/>
            <person name="Shimizu A."/>
            <person name="Tsukatani N."/>
            <person name="Tanikawa S."/>
            <person name="Fujita N."/>
            <person name="Harayama S."/>
        </authorList>
    </citation>
    <scope>NUCLEOTIDE SEQUENCE [LARGE SCALE GENOMIC DNA]</scope>
    <source>
        <strain>B4</strain>
    </source>
</reference>
<protein>
    <recommendedName>
        <fullName evidence="1">Glucose-6-phosphate isomerase</fullName>
        <shortName evidence="1">GPI</shortName>
        <ecNumber evidence="1">5.3.1.9</ecNumber>
    </recommendedName>
    <alternativeName>
        <fullName evidence="1">Phosphoglucose isomerase</fullName>
        <shortName evidence="1">PGI</shortName>
    </alternativeName>
    <alternativeName>
        <fullName evidence="1">Phosphohexose isomerase</fullName>
        <shortName evidence="1">PHI</shortName>
    </alternativeName>
</protein>
<accession>C1AWW0</accession>
<organism>
    <name type="scientific">Rhodococcus opacus (strain B4)</name>
    <dbReference type="NCBI Taxonomy" id="632772"/>
    <lineage>
        <taxon>Bacteria</taxon>
        <taxon>Bacillati</taxon>
        <taxon>Actinomycetota</taxon>
        <taxon>Actinomycetes</taxon>
        <taxon>Mycobacteriales</taxon>
        <taxon>Nocardiaceae</taxon>
        <taxon>Rhodococcus</taxon>
    </lineage>
</organism>